<name>DAAF3_MOUSE</name>
<accession>Q3UYV8</accession>
<accession>B2RX55</accession>
<gene>
    <name type="primary">Dnaaf3</name>
</gene>
<feature type="chain" id="PRO_0000297582" description="Dynein axonemal assembly factor 3">
    <location>
        <begin position="1"/>
        <end position="586"/>
    </location>
</feature>
<feature type="region of interest" description="Disordered" evidence="3">
    <location>
        <begin position="455"/>
        <end position="493"/>
    </location>
</feature>
<comment type="function">
    <text evidence="1">Required for the assembly of axonemal inner and outer dynein arms. Involved in preassembly of dyneins into complexes before their transport into cilia (By similarity).</text>
</comment>
<comment type="subcellular location">
    <subcellularLocation>
        <location evidence="1">Cytoplasm</location>
    </subcellularLocation>
    <subcellularLocation>
        <location evidence="2">Dynein axonemal particle</location>
    </subcellularLocation>
</comment>
<comment type="similarity">
    <text evidence="4">Belongs to the DNAAF3 family.</text>
</comment>
<sequence length="586" mass="64613">MTTPAGSGTGYGSVSWWGLSPALDLQAESPPVDPDSQSKTERKVPELDALLLGSVDGRHMLRTLARAALWPLRSFNFYVLENNLEAVARHMLIFSLALEEPEKMGLQERSETFLELWGNALLRPSVAAFLRAQASHLANLVLEPDRLEEQLPWLSLRLLKFRERDALEAVFRFWSGGEKGPEVFPMSRLWDSRLRHYLGSRYDARRGVADWDLRMKLHDRGAQVIHIQEFRRWRDTGVAFELRDLSAYHVPNRTLASGRLLSHRGERVAARGYWGDIATGPFMAFGIEADDQSLLRTRNGQPVKTASEITQHNVTELFREVAAWRGPRAIQGNVEETESPEPDVPAQEPFTIHFLPLDSSQTLHHKTCYQGRFQLLYVSCGMVHLLSPELGACVAPGGNLVVELARYLVDLRPKELKAFSDRVVEIARVAGFAPHTATKPSETFARFYKLGDSTPGGGDSAVESGPAPSKVESTRAPLPESISPPQANQAPSLEAMSPPLADLAPPLETMCPPQANQAPPLEALSPSKADQIPPLEAMSPPQAKLVLPVEAISLPQADLASPPEVISPLQEAMATSWVNAPPKHVT</sequence>
<organism>
    <name type="scientific">Mus musculus</name>
    <name type="common">Mouse</name>
    <dbReference type="NCBI Taxonomy" id="10090"/>
    <lineage>
        <taxon>Eukaryota</taxon>
        <taxon>Metazoa</taxon>
        <taxon>Chordata</taxon>
        <taxon>Craniata</taxon>
        <taxon>Vertebrata</taxon>
        <taxon>Euteleostomi</taxon>
        <taxon>Mammalia</taxon>
        <taxon>Eutheria</taxon>
        <taxon>Euarchontoglires</taxon>
        <taxon>Glires</taxon>
        <taxon>Rodentia</taxon>
        <taxon>Myomorpha</taxon>
        <taxon>Muroidea</taxon>
        <taxon>Muridae</taxon>
        <taxon>Murinae</taxon>
        <taxon>Mus</taxon>
        <taxon>Mus</taxon>
    </lineage>
</organism>
<proteinExistence type="evidence at protein level"/>
<protein>
    <recommendedName>
        <fullName>Dynein axonemal assembly factor 3</fullName>
    </recommendedName>
</protein>
<dbReference type="EMBL" id="AK134335">
    <property type="protein sequence ID" value="BAE22103.1"/>
    <property type="molecule type" value="mRNA"/>
</dbReference>
<dbReference type="EMBL" id="BC150983">
    <property type="protein sequence ID" value="AAI50984.1"/>
    <property type="molecule type" value="mRNA"/>
</dbReference>
<dbReference type="CCDS" id="CCDS20737.1"/>
<dbReference type="RefSeq" id="NP_001028720.1">
    <property type="nucleotide sequence ID" value="NM_001033548.3"/>
</dbReference>
<dbReference type="BioGRID" id="242677">
    <property type="interactions" value="1"/>
</dbReference>
<dbReference type="STRING" id="10090.ENSMUSP00000092498"/>
<dbReference type="PhosphoSitePlus" id="Q3UYV8"/>
<dbReference type="SwissPalm" id="Q3UYV8"/>
<dbReference type="PaxDb" id="10090-ENSMUSP00000092498"/>
<dbReference type="ProteomicsDB" id="279261"/>
<dbReference type="Ensembl" id="ENSMUST00000094897.5">
    <property type="protein sequence ID" value="ENSMUSP00000092498.5"/>
    <property type="gene ID" value="ENSMUSG00000055809.8"/>
</dbReference>
<dbReference type="GeneID" id="436022"/>
<dbReference type="KEGG" id="mmu:436022"/>
<dbReference type="UCSC" id="uc009exw.1">
    <property type="organism name" value="mouse"/>
</dbReference>
<dbReference type="AGR" id="MGI:3588207"/>
<dbReference type="CTD" id="352909"/>
<dbReference type="MGI" id="MGI:3588207">
    <property type="gene designation" value="Dnaaf3"/>
</dbReference>
<dbReference type="VEuPathDB" id="HostDB:ENSMUSG00000055809"/>
<dbReference type="eggNOG" id="ENOG502QT97">
    <property type="taxonomic scope" value="Eukaryota"/>
</dbReference>
<dbReference type="GeneTree" id="ENSGT00390000002069"/>
<dbReference type="HOGENOM" id="CLU_024420_2_1_1"/>
<dbReference type="InParanoid" id="Q3UYV8"/>
<dbReference type="OMA" id="MREGIYQ"/>
<dbReference type="OrthoDB" id="538817at2759"/>
<dbReference type="PhylomeDB" id="Q3UYV8"/>
<dbReference type="TreeFam" id="TF323981"/>
<dbReference type="BioGRID-ORCS" id="436022">
    <property type="hits" value="0 hits in 80 CRISPR screens"/>
</dbReference>
<dbReference type="ChiTaRS" id="Dnaaf3">
    <property type="organism name" value="mouse"/>
</dbReference>
<dbReference type="PRO" id="PR:Q3UYV8"/>
<dbReference type="Proteomes" id="UP000000589">
    <property type="component" value="Chromosome 7"/>
</dbReference>
<dbReference type="RNAct" id="Q3UYV8">
    <property type="molecule type" value="protein"/>
</dbReference>
<dbReference type="Bgee" id="ENSMUSG00000055809">
    <property type="expression patterns" value="Expressed in spermatid and 47 other cell types or tissues"/>
</dbReference>
<dbReference type="GO" id="GO:0120293">
    <property type="term" value="C:dynein axonemal particle"/>
    <property type="evidence" value="ECO:0000250"/>
    <property type="project" value="UniProtKB"/>
</dbReference>
<dbReference type="GO" id="GO:0005576">
    <property type="term" value="C:extracellular region"/>
    <property type="evidence" value="ECO:0007669"/>
    <property type="project" value="GOC"/>
</dbReference>
<dbReference type="GO" id="GO:0070286">
    <property type="term" value="P:axonemal dynein complex assembly"/>
    <property type="evidence" value="ECO:0000250"/>
    <property type="project" value="UniProtKB"/>
</dbReference>
<dbReference type="GO" id="GO:0007420">
    <property type="term" value="P:brain development"/>
    <property type="evidence" value="ECO:0000315"/>
    <property type="project" value="MGI"/>
</dbReference>
<dbReference type="GO" id="GO:0000902">
    <property type="term" value="P:cell morphogenesis"/>
    <property type="evidence" value="ECO:0000315"/>
    <property type="project" value="MGI"/>
</dbReference>
<dbReference type="GO" id="GO:0090660">
    <property type="term" value="P:cerebrospinal fluid circulation"/>
    <property type="evidence" value="ECO:0000315"/>
    <property type="project" value="MGI"/>
</dbReference>
<dbReference type="GO" id="GO:0008340">
    <property type="term" value="P:determination of adult lifespan"/>
    <property type="evidence" value="ECO:0000315"/>
    <property type="project" value="MGI"/>
</dbReference>
<dbReference type="GO" id="GO:0007368">
    <property type="term" value="P:determination of left/right symmetry"/>
    <property type="evidence" value="ECO:0000315"/>
    <property type="project" value="MGI"/>
</dbReference>
<dbReference type="GO" id="GO:0007507">
    <property type="term" value="P:heart development"/>
    <property type="evidence" value="ECO:0000315"/>
    <property type="project" value="MGI"/>
</dbReference>
<dbReference type="GO" id="GO:0030324">
    <property type="term" value="P:lung development"/>
    <property type="evidence" value="ECO:0000315"/>
    <property type="project" value="MGI"/>
</dbReference>
<dbReference type="GO" id="GO:0008584">
    <property type="term" value="P:male gonad development"/>
    <property type="evidence" value="ECO:0000315"/>
    <property type="project" value="MGI"/>
</dbReference>
<dbReference type="GO" id="GO:0044458">
    <property type="term" value="P:motile cilium assembly"/>
    <property type="evidence" value="ECO:0000250"/>
    <property type="project" value="UniProtKB"/>
</dbReference>
<dbReference type="GO" id="GO:0035264">
    <property type="term" value="P:multicellular organism growth"/>
    <property type="evidence" value="ECO:0000315"/>
    <property type="project" value="MGI"/>
</dbReference>
<dbReference type="GO" id="GO:0072520">
    <property type="term" value="P:seminiferous tubule development"/>
    <property type="evidence" value="ECO:0000315"/>
    <property type="project" value="MGI"/>
</dbReference>
<dbReference type="GO" id="GO:0007283">
    <property type="term" value="P:spermatogenesis"/>
    <property type="evidence" value="ECO:0000315"/>
    <property type="project" value="MGI"/>
</dbReference>
<dbReference type="InterPro" id="IPR039304">
    <property type="entry name" value="DNAAF3"/>
</dbReference>
<dbReference type="InterPro" id="IPR028235">
    <property type="entry name" value="DNAAF3_C"/>
</dbReference>
<dbReference type="InterPro" id="IPR027974">
    <property type="entry name" value="DUF4470"/>
</dbReference>
<dbReference type="PANTHER" id="PTHR22118">
    <property type="entry name" value="DYNEIN ASSEMBLY FACTOR 3, AXONEMAL"/>
    <property type="match status" value="1"/>
</dbReference>
<dbReference type="PANTHER" id="PTHR22118:SF14">
    <property type="entry name" value="DYNEIN AXONEMAL ASSEMBLY FACTOR 3"/>
    <property type="match status" value="1"/>
</dbReference>
<dbReference type="Pfam" id="PF14737">
    <property type="entry name" value="DUF4470"/>
    <property type="match status" value="1"/>
</dbReference>
<dbReference type="Pfam" id="PF14740">
    <property type="entry name" value="DUF4471"/>
    <property type="match status" value="1"/>
</dbReference>
<evidence type="ECO:0000250" key="1"/>
<evidence type="ECO:0000250" key="2">
    <source>
        <dbReference type="UniProtKB" id="Q32NQ7"/>
    </source>
</evidence>
<evidence type="ECO:0000256" key="3">
    <source>
        <dbReference type="SAM" id="MobiDB-lite"/>
    </source>
</evidence>
<evidence type="ECO:0000305" key="4"/>
<keyword id="KW-0970">Cilium biogenesis/degradation</keyword>
<keyword id="KW-0963">Cytoplasm</keyword>
<keyword id="KW-1185">Reference proteome</keyword>
<reference key="1">
    <citation type="journal article" date="2005" name="Science">
        <title>The transcriptional landscape of the mammalian genome.</title>
        <authorList>
            <person name="Carninci P."/>
            <person name="Kasukawa T."/>
            <person name="Katayama S."/>
            <person name="Gough J."/>
            <person name="Frith M.C."/>
            <person name="Maeda N."/>
            <person name="Oyama R."/>
            <person name="Ravasi T."/>
            <person name="Lenhard B."/>
            <person name="Wells C."/>
            <person name="Kodzius R."/>
            <person name="Shimokawa K."/>
            <person name="Bajic V.B."/>
            <person name="Brenner S.E."/>
            <person name="Batalov S."/>
            <person name="Forrest A.R."/>
            <person name="Zavolan M."/>
            <person name="Davis M.J."/>
            <person name="Wilming L.G."/>
            <person name="Aidinis V."/>
            <person name="Allen J.E."/>
            <person name="Ambesi-Impiombato A."/>
            <person name="Apweiler R."/>
            <person name="Aturaliya R.N."/>
            <person name="Bailey T.L."/>
            <person name="Bansal M."/>
            <person name="Baxter L."/>
            <person name="Beisel K.W."/>
            <person name="Bersano T."/>
            <person name="Bono H."/>
            <person name="Chalk A.M."/>
            <person name="Chiu K.P."/>
            <person name="Choudhary V."/>
            <person name="Christoffels A."/>
            <person name="Clutterbuck D.R."/>
            <person name="Crowe M.L."/>
            <person name="Dalla E."/>
            <person name="Dalrymple B.P."/>
            <person name="de Bono B."/>
            <person name="Della Gatta G."/>
            <person name="di Bernardo D."/>
            <person name="Down T."/>
            <person name="Engstrom P."/>
            <person name="Fagiolini M."/>
            <person name="Faulkner G."/>
            <person name="Fletcher C.F."/>
            <person name="Fukushima T."/>
            <person name="Furuno M."/>
            <person name="Futaki S."/>
            <person name="Gariboldi M."/>
            <person name="Georgii-Hemming P."/>
            <person name="Gingeras T.R."/>
            <person name="Gojobori T."/>
            <person name="Green R.E."/>
            <person name="Gustincich S."/>
            <person name="Harbers M."/>
            <person name="Hayashi Y."/>
            <person name="Hensch T.K."/>
            <person name="Hirokawa N."/>
            <person name="Hill D."/>
            <person name="Huminiecki L."/>
            <person name="Iacono M."/>
            <person name="Ikeo K."/>
            <person name="Iwama A."/>
            <person name="Ishikawa T."/>
            <person name="Jakt M."/>
            <person name="Kanapin A."/>
            <person name="Katoh M."/>
            <person name="Kawasawa Y."/>
            <person name="Kelso J."/>
            <person name="Kitamura H."/>
            <person name="Kitano H."/>
            <person name="Kollias G."/>
            <person name="Krishnan S.P."/>
            <person name="Kruger A."/>
            <person name="Kummerfeld S.K."/>
            <person name="Kurochkin I.V."/>
            <person name="Lareau L.F."/>
            <person name="Lazarevic D."/>
            <person name="Lipovich L."/>
            <person name="Liu J."/>
            <person name="Liuni S."/>
            <person name="McWilliam S."/>
            <person name="Madan Babu M."/>
            <person name="Madera M."/>
            <person name="Marchionni L."/>
            <person name="Matsuda H."/>
            <person name="Matsuzawa S."/>
            <person name="Miki H."/>
            <person name="Mignone F."/>
            <person name="Miyake S."/>
            <person name="Morris K."/>
            <person name="Mottagui-Tabar S."/>
            <person name="Mulder N."/>
            <person name="Nakano N."/>
            <person name="Nakauchi H."/>
            <person name="Ng P."/>
            <person name="Nilsson R."/>
            <person name="Nishiguchi S."/>
            <person name="Nishikawa S."/>
            <person name="Nori F."/>
            <person name="Ohara O."/>
            <person name="Okazaki Y."/>
            <person name="Orlando V."/>
            <person name="Pang K.C."/>
            <person name="Pavan W.J."/>
            <person name="Pavesi G."/>
            <person name="Pesole G."/>
            <person name="Petrovsky N."/>
            <person name="Piazza S."/>
            <person name="Reed J."/>
            <person name="Reid J.F."/>
            <person name="Ring B.Z."/>
            <person name="Ringwald M."/>
            <person name="Rost B."/>
            <person name="Ruan Y."/>
            <person name="Salzberg S.L."/>
            <person name="Sandelin A."/>
            <person name="Schneider C."/>
            <person name="Schoenbach C."/>
            <person name="Sekiguchi K."/>
            <person name="Semple C.A."/>
            <person name="Seno S."/>
            <person name="Sessa L."/>
            <person name="Sheng Y."/>
            <person name="Shibata Y."/>
            <person name="Shimada H."/>
            <person name="Shimada K."/>
            <person name="Silva D."/>
            <person name="Sinclair B."/>
            <person name="Sperling S."/>
            <person name="Stupka E."/>
            <person name="Sugiura K."/>
            <person name="Sultana R."/>
            <person name="Takenaka Y."/>
            <person name="Taki K."/>
            <person name="Tammoja K."/>
            <person name="Tan S.L."/>
            <person name="Tang S."/>
            <person name="Taylor M.S."/>
            <person name="Tegner J."/>
            <person name="Teichmann S.A."/>
            <person name="Ueda H.R."/>
            <person name="van Nimwegen E."/>
            <person name="Verardo R."/>
            <person name="Wei C.L."/>
            <person name="Yagi K."/>
            <person name="Yamanishi H."/>
            <person name="Zabarovsky E."/>
            <person name="Zhu S."/>
            <person name="Zimmer A."/>
            <person name="Hide W."/>
            <person name="Bult C."/>
            <person name="Grimmond S.M."/>
            <person name="Teasdale R.D."/>
            <person name="Liu E.T."/>
            <person name="Brusic V."/>
            <person name="Quackenbush J."/>
            <person name="Wahlestedt C."/>
            <person name="Mattick J.S."/>
            <person name="Hume D.A."/>
            <person name="Kai C."/>
            <person name="Sasaki D."/>
            <person name="Tomaru Y."/>
            <person name="Fukuda S."/>
            <person name="Kanamori-Katayama M."/>
            <person name="Suzuki M."/>
            <person name="Aoki J."/>
            <person name="Arakawa T."/>
            <person name="Iida J."/>
            <person name="Imamura K."/>
            <person name="Itoh M."/>
            <person name="Kato T."/>
            <person name="Kawaji H."/>
            <person name="Kawagashira N."/>
            <person name="Kawashima T."/>
            <person name="Kojima M."/>
            <person name="Kondo S."/>
            <person name="Konno H."/>
            <person name="Nakano K."/>
            <person name="Ninomiya N."/>
            <person name="Nishio T."/>
            <person name="Okada M."/>
            <person name="Plessy C."/>
            <person name="Shibata K."/>
            <person name="Shiraki T."/>
            <person name="Suzuki S."/>
            <person name="Tagami M."/>
            <person name="Waki K."/>
            <person name="Watahiki A."/>
            <person name="Okamura-Oho Y."/>
            <person name="Suzuki H."/>
            <person name="Kawai J."/>
            <person name="Hayashizaki Y."/>
        </authorList>
    </citation>
    <scope>NUCLEOTIDE SEQUENCE [LARGE SCALE MRNA]</scope>
    <source>
        <strain>C57BL/6J</strain>
        <tissue>Testis</tissue>
    </source>
</reference>
<reference key="2">
    <citation type="journal article" date="2004" name="Genome Res.">
        <title>The status, quality, and expansion of the NIH full-length cDNA project: the Mammalian Gene Collection (MGC).</title>
        <authorList>
            <consortium name="The MGC Project Team"/>
        </authorList>
    </citation>
    <scope>NUCLEOTIDE SEQUENCE [LARGE SCALE MRNA]</scope>
    <source>
        <tissue>Brain</tissue>
    </source>
</reference>
<reference key="3">
    <citation type="journal article" date="2010" name="Cell">
        <title>A tissue-specific atlas of mouse protein phosphorylation and expression.</title>
        <authorList>
            <person name="Huttlin E.L."/>
            <person name="Jedrychowski M.P."/>
            <person name="Elias J.E."/>
            <person name="Goswami T."/>
            <person name="Rad R."/>
            <person name="Beausoleil S.A."/>
            <person name="Villen J."/>
            <person name="Haas W."/>
            <person name="Sowa M.E."/>
            <person name="Gygi S.P."/>
        </authorList>
    </citation>
    <scope>IDENTIFICATION BY MASS SPECTROMETRY [LARGE SCALE ANALYSIS]</scope>
    <source>
        <tissue>Testis</tissue>
    </source>
</reference>